<proteinExistence type="inferred from homology"/>
<accession>Q1CTD3</accession>
<reference key="1">
    <citation type="journal article" date="2006" name="Proc. Natl. Acad. Sci. U.S.A.">
        <title>The complete genome sequence of a chronic atrophic gastritis Helicobacter pylori strain: evolution during disease progression.</title>
        <authorList>
            <person name="Oh J.D."/>
            <person name="Kling-Baeckhed H."/>
            <person name="Giannakis M."/>
            <person name="Xu J."/>
            <person name="Fulton R.S."/>
            <person name="Fulton L.A."/>
            <person name="Cordum H.S."/>
            <person name="Wang C."/>
            <person name="Elliott G."/>
            <person name="Edwards J."/>
            <person name="Mardis E.R."/>
            <person name="Engstrand L.G."/>
            <person name="Gordon J.I."/>
        </authorList>
    </citation>
    <scope>NUCLEOTIDE SEQUENCE [LARGE SCALE GENOMIC DNA]</scope>
    <source>
        <strain>HPAG1</strain>
    </source>
</reference>
<evidence type="ECO:0000250" key="1"/>
<evidence type="ECO:0000255" key="2">
    <source>
        <dbReference type="HAMAP-Rule" id="MF_00047"/>
    </source>
</evidence>
<gene>
    <name evidence="2" type="primary">ddl</name>
    <name type="ordered locus">HPAG1_0722</name>
</gene>
<feature type="chain" id="PRO_1000074776" description="D-alanine--D-alanine ligase">
    <location>
        <begin position="1"/>
        <end position="347"/>
    </location>
</feature>
<feature type="domain" description="ATP-grasp" evidence="2">
    <location>
        <begin position="134"/>
        <end position="332"/>
    </location>
</feature>
<feature type="binding site" evidence="2">
    <location>
        <begin position="161"/>
        <end position="216"/>
    </location>
    <ligand>
        <name>ATP</name>
        <dbReference type="ChEBI" id="CHEBI:30616"/>
    </ligand>
</feature>
<feature type="binding site" evidence="2">
    <location>
        <position position="288"/>
    </location>
    <ligand>
        <name>Mg(2+)</name>
        <dbReference type="ChEBI" id="CHEBI:18420"/>
        <label>1</label>
    </ligand>
</feature>
<feature type="binding site" evidence="2">
    <location>
        <position position="300"/>
    </location>
    <ligand>
        <name>Mg(2+)</name>
        <dbReference type="ChEBI" id="CHEBI:18420"/>
        <label>1</label>
    </ligand>
</feature>
<feature type="binding site" evidence="2">
    <location>
        <position position="300"/>
    </location>
    <ligand>
        <name>Mg(2+)</name>
        <dbReference type="ChEBI" id="CHEBI:18420"/>
        <label>2</label>
    </ligand>
</feature>
<feature type="binding site" evidence="2">
    <location>
        <position position="302"/>
    </location>
    <ligand>
        <name>Mg(2+)</name>
        <dbReference type="ChEBI" id="CHEBI:18420"/>
        <label>2</label>
    </ligand>
</feature>
<sequence>MEFCVLFGGASFEHEISIVSAIALKGVLKDRIKYFIFLDENHHFYLIEASNMHSKYFAQIKEKKLPPLILTHKGLLKNSFLGAKIIELPLVINLVHGGDGEDGKLASLLEFYRIAFIGPRIEASVLSYNKYLTKLYAKDLGIKTLDHVLLNEKNRANAMDLINFNFPFIIKPNSAGSSLGVSVVKEEKELNYALDSAFEYSKEVLIEPFIQGVKEYNLAGCKIKKDFCFSYVEEPNKQEFLDFKQKYLDFSRTKAPKANLSNALEEQLKENFKKLYNDLFDGAIIRCDFFVIENEVYLNEINPIPGSLANYLFDDFKTTLENLAQSLPKTPKIQIKNSYLLQIQKNK</sequence>
<comment type="function">
    <text evidence="2">Cell wall formation.</text>
</comment>
<comment type="catalytic activity">
    <reaction evidence="2">
        <text>2 D-alanine + ATP = D-alanyl-D-alanine + ADP + phosphate + H(+)</text>
        <dbReference type="Rhea" id="RHEA:11224"/>
        <dbReference type="ChEBI" id="CHEBI:15378"/>
        <dbReference type="ChEBI" id="CHEBI:30616"/>
        <dbReference type="ChEBI" id="CHEBI:43474"/>
        <dbReference type="ChEBI" id="CHEBI:57416"/>
        <dbReference type="ChEBI" id="CHEBI:57822"/>
        <dbReference type="ChEBI" id="CHEBI:456216"/>
        <dbReference type="EC" id="6.3.2.4"/>
    </reaction>
</comment>
<comment type="cofactor">
    <cofactor evidence="1">
        <name>Mg(2+)</name>
        <dbReference type="ChEBI" id="CHEBI:18420"/>
    </cofactor>
    <cofactor evidence="1">
        <name>Mn(2+)</name>
        <dbReference type="ChEBI" id="CHEBI:29035"/>
    </cofactor>
    <text evidence="1">Binds 2 magnesium or manganese ions per subunit.</text>
</comment>
<comment type="pathway">
    <text evidence="2">Cell wall biogenesis; peptidoglycan biosynthesis.</text>
</comment>
<comment type="subcellular location">
    <subcellularLocation>
        <location evidence="2">Cytoplasm</location>
    </subcellularLocation>
</comment>
<comment type="similarity">
    <text evidence="2">Belongs to the D-alanine--D-alanine ligase family.</text>
</comment>
<protein>
    <recommendedName>
        <fullName evidence="2">D-alanine--D-alanine ligase</fullName>
        <ecNumber evidence="2">6.3.2.4</ecNumber>
    </recommendedName>
    <alternativeName>
        <fullName evidence="2">D-Ala-D-Ala ligase</fullName>
    </alternativeName>
    <alternativeName>
        <fullName evidence="2">D-alanylalanine synthetase</fullName>
    </alternativeName>
</protein>
<name>DDL_HELPH</name>
<keyword id="KW-0067">ATP-binding</keyword>
<keyword id="KW-0133">Cell shape</keyword>
<keyword id="KW-0961">Cell wall biogenesis/degradation</keyword>
<keyword id="KW-0963">Cytoplasm</keyword>
<keyword id="KW-0436">Ligase</keyword>
<keyword id="KW-0460">Magnesium</keyword>
<keyword id="KW-0464">Manganese</keyword>
<keyword id="KW-0479">Metal-binding</keyword>
<keyword id="KW-0547">Nucleotide-binding</keyword>
<keyword id="KW-0573">Peptidoglycan synthesis</keyword>
<dbReference type="EC" id="6.3.2.4" evidence="2"/>
<dbReference type="EMBL" id="CP000241">
    <property type="protein sequence ID" value="ABF84789.1"/>
    <property type="molecule type" value="Genomic_DNA"/>
</dbReference>
<dbReference type="RefSeq" id="WP_011550032.1">
    <property type="nucleotide sequence ID" value="NC_008086.1"/>
</dbReference>
<dbReference type="SMR" id="Q1CTD3"/>
<dbReference type="BindingDB" id="Q1CTD3"/>
<dbReference type="ChEMBL" id="CHEMBL2366488"/>
<dbReference type="DrugCentral" id="Q1CTD3"/>
<dbReference type="KEGG" id="hpa:HPAG1_0722"/>
<dbReference type="HOGENOM" id="CLU_039268_0_2_7"/>
<dbReference type="UniPathway" id="UPA00219"/>
<dbReference type="GO" id="GO:0005737">
    <property type="term" value="C:cytoplasm"/>
    <property type="evidence" value="ECO:0007669"/>
    <property type="project" value="UniProtKB-SubCell"/>
</dbReference>
<dbReference type="GO" id="GO:0005524">
    <property type="term" value="F:ATP binding"/>
    <property type="evidence" value="ECO:0007669"/>
    <property type="project" value="UniProtKB-KW"/>
</dbReference>
<dbReference type="GO" id="GO:0008716">
    <property type="term" value="F:D-alanine-D-alanine ligase activity"/>
    <property type="evidence" value="ECO:0007669"/>
    <property type="project" value="UniProtKB-UniRule"/>
</dbReference>
<dbReference type="GO" id="GO:0046872">
    <property type="term" value="F:metal ion binding"/>
    <property type="evidence" value="ECO:0007669"/>
    <property type="project" value="UniProtKB-KW"/>
</dbReference>
<dbReference type="GO" id="GO:0071555">
    <property type="term" value="P:cell wall organization"/>
    <property type="evidence" value="ECO:0007669"/>
    <property type="project" value="UniProtKB-KW"/>
</dbReference>
<dbReference type="GO" id="GO:0009252">
    <property type="term" value="P:peptidoglycan biosynthetic process"/>
    <property type="evidence" value="ECO:0007669"/>
    <property type="project" value="UniProtKB-UniRule"/>
</dbReference>
<dbReference type="GO" id="GO:0008360">
    <property type="term" value="P:regulation of cell shape"/>
    <property type="evidence" value="ECO:0007669"/>
    <property type="project" value="UniProtKB-KW"/>
</dbReference>
<dbReference type="Gene3D" id="3.40.50.20">
    <property type="match status" value="1"/>
</dbReference>
<dbReference type="Gene3D" id="3.30.1490.20">
    <property type="entry name" value="ATP-grasp fold, A domain"/>
    <property type="match status" value="1"/>
</dbReference>
<dbReference type="Gene3D" id="3.30.470.20">
    <property type="entry name" value="ATP-grasp fold, B domain"/>
    <property type="match status" value="1"/>
</dbReference>
<dbReference type="HAMAP" id="MF_00047">
    <property type="entry name" value="Dala_Dala_lig"/>
    <property type="match status" value="1"/>
</dbReference>
<dbReference type="InterPro" id="IPR011761">
    <property type="entry name" value="ATP-grasp"/>
</dbReference>
<dbReference type="InterPro" id="IPR013815">
    <property type="entry name" value="ATP_grasp_subdomain_1"/>
</dbReference>
<dbReference type="InterPro" id="IPR000291">
    <property type="entry name" value="D-Ala_lig_Van_CS"/>
</dbReference>
<dbReference type="InterPro" id="IPR005905">
    <property type="entry name" value="D_ala_D_ala"/>
</dbReference>
<dbReference type="InterPro" id="IPR011095">
    <property type="entry name" value="Dala_Dala_lig_C"/>
</dbReference>
<dbReference type="InterPro" id="IPR011127">
    <property type="entry name" value="Dala_Dala_lig_N"/>
</dbReference>
<dbReference type="InterPro" id="IPR016185">
    <property type="entry name" value="PreATP-grasp_dom_sf"/>
</dbReference>
<dbReference type="NCBIfam" id="TIGR01205">
    <property type="entry name" value="D_ala_D_alaTIGR"/>
    <property type="match status" value="1"/>
</dbReference>
<dbReference type="NCBIfam" id="NF002527">
    <property type="entry name" value="PRK01966.1-3"/>
    <property type="match status" value="1"/>
</dbReference>
<dbReference type="PANTHER" id="PTHR23132">
    <property type="entry name" value="D-ALANINE--D-ALANINE LIGASE"/>
    <property type="match status" value="1"/>
</dbReference>
<dbReference type="PANTHER" id="PTHR23132:SF23">
    <property type="entry name" value="D-ALANINE--D-ALANINE LIGASE B"/>
    <property type="match status" value="1"/>
</dbReference>
<dbReference type="Pfam" id="PF07478">
    <property type="entry name" value="Dala_Dala_lig_C"/>
    <property type="match status" value="1"/>
</dbReference>
<dbReference type="Pfam" id="PF01820">
    <property type="entry name" value="Dala_Dala_lig_N"/>
    <property type="match status" value="1"/>
</dbReference>
<dbReference type="SUPFAM" id="SSF56059">
    <property type="entry name" value="Glutathione synthetase ATP-binding domain-like"/>
    <property type="match status" value="1"/>
</dbReference>
<dbReference type="SUPFAM" id="SSF52440">
    <property type="entry name" value="PreATP-grasp domain"/>
    <property type="match status" value="1"/>
</dbReference>
<dbReference type="PROSITE" id="PS50975">
    <property type="entry name" value="ATP_GRASP"/>
    <property type="match status" value="1"/>
</dbReference>
<dbReference type="PROSITE" id="PS00843">
    <property type="entry name" value="DALA_DALA_LIGASE_1"/>
    <property type="match status" value="1"/>
</dbReference>
<dbReference type="PROSITE" id="PS00844">
    <property type="entry name" value="DALA_DALA_LIGASE_2"/>
    <property type="match status" value="1"/>
</dbReference>
<organism>
    <name type="scientific">Helicobacter pylori (strain HPAG1)</name>
    <dbReference type="NCBI Taxonomy" id="357544"/>
    <lineage>
        <taxon>Bacteria</taxon>
        <taxon>Pseudomonadati</taxon>
        <taxon>Campylobacterota</taxon>
        <taxon>Epsilonproteobacteria</taxon>
        <taxon>Campylobacterales</taxon>
        <taxon>Helicobacteraceae</taxon>
        <taxon>Helicobacter</taxon>
    </lineage>
</organism>